<sequence length="98" mass="10960">MPYIYTNLFLAFLTSLLGMLIYRSHLMSSLLCLEGMMLSMFIMTSLTILNLHFTLSNMIPIILLVFAACEAAVGLALLVMVSNTYGLDYVQNLNLLQC</sequence>
<evidence type="ECO:0000250" key="1">
    <source>
        <dbReference type="UniProtKB" id="P03901"/>
    </source>
</evidence>
<evidence type="ECO:0000250" key="2">
    <source>
        <dbReference type="UniProtKB" id="P03902"/>
    </source>
</evidence>
<evidence type="ECO:0000255" key="3"/>
<evidence type="ECO:0000305" key="4"/>
<dbReference type="EC" id="7.1.1.2"/>
<dbReference type="EMBL" id="AF348159">
    <property type="protein sequence ID" value="AAK69666.1"/>
    <property type="molecule type" value="Genomic_DNA"/>
</dbReference>
<dbReference type="RefSeq" id="NP_148746.1">
    <property type="nucleotide sequence ID" value="NC_002811.1"/>
</dbReference>
<dbReference type="SMR" id="Q8SJ54"/>
<dbReference type="GeneID" id="803402"/>
<dbReference type="CTD" id="4539"/>
<dbReference type="GO" id="GO:0005743">
    <property type="term" value="C:mitochondrial inner membrane"/>
    <property type="evidence" value="ECO:0000250"/>
    <property type="project" value="UniProtKB"/>
</dbReference>
<dbReference type="GO" id="GO:0045271">
    <property type="term" value="C:respiratory chain complex I"/>
    <property type="evidence" value="ECO:0000250"/>
    <property type="project" value="UniProtKB"/>
</dbReference>
<dbReference type="GO" id="GO:0008137">
    <property type="term" value="F:NADH dehydrogenase (ubiquinone) activity"/>
    <property type="evidence" value="ECO:0000250"/>
    <property type="project" value="UniProtKB"/>
</dbReference>
<dbReference type="GO" id="GO:0042773">
    <property type="term" value="P:ATP synthesis coupled electron transport"/>
    <property type="evidence" value="ECO:0007669"/>
    <property type="project" value="InterPro"/>
</dbReference>
<dbReference type="FunFam" id="1.10.287.3510:FF:000002">
    <property type="entry name" value="NADH-ubiquinone oxidoreductase chain 4L"/>
    <property type="match status" value="1"/>
</dbReference>
<dbReference type="Gene3D" id="1.10.287.3510">
    <property type="match status" value="1"/>
</dbReference>
<dbReference type="InterPro" id="IPR001133">
    <property type="entry name" value="NADH_UbQ_OxRdtase_chain4L/K"/>
</dbReference>
<dbReference type="InterPro" id="IPR039428">
    <property type="entry name" value="NUOK/Mnh_C1-like"/>
</dbReference>
<dbReference type="PANTHER" id="PTHR11434:SF0">
    <property type="entry name" value="NADH-UBIQUINONE OXIDOREDUCTASE CHAIN 4L"/>
    <property type="match status" value="1"/>
</dbReference>
<dbReference type="PANTHER" id="PTHR11434">
    <property type="entry name" value="NADH-UBIQUINONE OXIDOREDUCTASE SUBUNIT ND4L"/>
    <property type="match status" value="1"/>
</dbReference>
<dbReference type="Pfam" id="PF00420">
    <property type="entry name" value="Oxidored_q2"/>
    <property type="match status" value="1"/>
</dbReference>
<gene>
    <name type="primary">MT-ND4L</name>
    <name type="synonym">MTND4L</name>
    <name type="synonym">NADH4L</name>
    <name type="synonym">ND4L</name>
</gene>
<proteinExistence type="inferred from homology"/>
<keyword id="KW-0249">Electron transport</keyword>
<keyword id="KW-0472">Membrane</keyword>
<keyword id="KW-0496">Mitochondrion</keyword>
<keyword id="KW-0999">Mitochondrion inner membrane</keyword>
<keyword id="KW-0520">NAD</keyword>
<keyword id="KW-0679">Respiratory chain</keyword>
<keyword id="KW-1278">Translocase</keyword>
<keyword id="KW-0812">Transmembrane</keyword>
<keyword id="KW-1133">Transmembrane helix</keyword>
<keyword id="KW-0813">Transport</keyword>
<keyword id="KW-0830">Ubiquinone</keyword>
<comment type="function">
    <text evidence="1">Core subunit of the mitochondrial membrane respiratory chain NADH dehydrogenase (Complex I) which catalyzes electron transfer from NADH through the respiratory chain, using ubiquinone as an electron acceptor. Part of the enzyme membrane arm which is embedded in the lipid bilayer and involved in proton translocation.</text>
</comment>
<comment type="catalytic activity">
    <reaction evidence="1">
        <text>a ubiquinone + NADH + 5 H(+)(in) = a ubiquinol + NAD(+) + 4 H(+)(out)</text>
        <dbReference type="Rhea" id="RHEA:29091"/>
        <dbReference type="Rhea" id="RHEA-COMP:9565"/>
        <dbReference type="Rhea" id="RHEA-COMP:9566"/>
        <dbReference type="ChEBI" id="CHEBI:15378"/>
        <dbReference type="ChEBI" id="CHEBI:16389"/>
        <dbReference type="ChEBI" id="CHEBI:17976"/>
        <dbReference type="ChEBI" id="CHEBI:57540"/>
        <dbReference type="ChEBI" id="CHEBI:57945"/>
        <dbReference type="EC" id="7.1.1.2"/>
    </reaction>
    <physiologicalReaction direction="left-to-right" evidence="1">
        <dbReference type="Rhea" id="RHEA:29092"/>
    </physiologicalReaction>
</comment>
<comment type="subunit">
    <text evidence="2">Core subunit of respiratory chain NADH dehydrogenase (Complex I) which is composed of 45 different subunits.</text>
</comment>
<comment type="subcellular location">
    <subcellularLocation>
        <location evidence="2">Mitochondrion inner membrane</location>
        <topology evidence="3">Multi-pass membrane protein</topology>
    </subcellularLocation>
</comment>
<comment type="similarity">
    <text evidence="4">Belongs to the complex I subunit 4L family.</text>
</comment>
<reference key="1">
    <citation type="journal article" date="2002" name="Mol. Biol. Evol.">
        <title>The complete mitochondrial sequence of Tarsius bancanus: evidence for an extensive nucleotide compositional plasticity of primate mitochondrial DNA.</title>
        <authorList>
            <person name="Schmitz J."/>
            <person name="Ohme M."/>
            <person name="Zischler H."/>
        </authorList>
    </citation>
    <scope>NUCLEOTIDE SEQUENCE [GENOMIC DNA]</scope>
</reference>
<accession>Q8SJ54</accession>
<geneLocation type="mitochondrion"/>
<protein>
    <recommendedName>
        <fullName>NADH-ubiquinone oxidoreductase chain 4L</fullName>
        <ecNumber>7.1.1.2</ecNumber>
    </recommendedName>
    <alternativeName>
        <fullName>NADH dehydrogenase subunit 4L</fullName>
    </alternativeName>
</protein>
<organism>
    <name type="scientific">Cephalopachus bancanus</name>
    <name type="common">Western tarsier</name>
    <name type="synonym">Tarsius bancanus</name>
    <dbReference type="NCBI Taxonomy" id="9477"/>
    <lineage>
        <taxon>Eukaryota</taxon>
        <taxon>Metazoa</taxon>
        <taxon>Chordata</taxon>
        <taxon>Craniata</taxon>
        <taxon>Vertebrata</taxon>
        <taxon>Euteleostomi</taxon>
        <taxon>Mammalia</taxon>
        <taxon>Eutheria</taxon>
        <taxon>Euarchontoglires</taxon>
        <taxon>Primates</taxon>
        <taxon>Haplorrhini</taxon>
        <taxon>Tarsiiformes</taxon>
        <taxon>Tarsiidae</taxon>
        <taxon>Cephalopachus</taxon>
    </lineage>
</organism>
<name>NU4LM_CEPBA</name>
<feature type="chain" id="PRO_0000275129" description="NADH-ubiquinone oxidoreductase chain 4L">
    <location>
        <begin position="1"/>
        <end position="98"/>
    </location>
</feature>
<feature type="transmembrane region" description="Helical" evidence="3">
    <location>
        <begin position="1"/>
        <end position="21"/>
    </location>
</feature>
<feature type="transmembrane region" description="Helical" evidence="3">
    <location>
        <begin position="29"/>
        <end position="49"/>
    </location>
</feature>
<feature type="transmembrane region" description="Helical" evidence="3">
    <location>
        <begin position="61"/>
        <end position="81"/>
    </location>
</feature>